<reference key="1">
    <citation type="submission" date="1993-10" db="EMBL/GenBank/DDBJ databases">
        <authorList>
            <person name="Richterich P."/>
            <person name="Lakey N."/>
            <person name="Gryan G."/>
            <person name="Jaehn L."/>
            <person name="Mintz L."/>
            <person name="Robison K."/>
            <person name="Church G.M."/>
        </authorList>
    </citation>
    <scope>NUCLEOTIDE SEQUENCE [GENOMIC DNA]</scope>
    <source>
        <strain>K12 / BHB2600</strain>
    </source>
</reference>
<reference key="2">
    <citation type="journal article" date="1995" name="J. Bacteriol.">
        <title>Escherichia coli genes required for cytochrome c maturation.</title>
        <authorList>
            <person name="Thoeny-Meyer L."/>
            <person name="Fischer F."/>
            <person name="Kunzler P."/>
            <person name="Ritz D."/>
            <person name="Hennecke H."/>
        </authorList>
    </citation>
    <scope>SEQUENCE REVISION</scope>
    <scope>CHARACTERIZATION</scope>
    <scope>GENE NAME</scope>
</reference>
<reference key="3">
    <citation type="journal article" date="1997" name="Science">
        <title>The complete genome sequence of Escherichia coli K-12.</title>
        <authorList>
            <person name="Blattner F.R."/>
            <person name="Plunkett G. III"/>
            <person name="Bloch C.A."/>
            <person name="Perna N.T."/>
            <person name="Burland V."/>
            <person name="Riley M."/>
            <person name="Collado-Vides J."/>
            <person name="Glasner J.D."/>
            <person name="Rode C.K."/>
            <person name="Mayhew G.F."/>
            <person name="Gregor J."/>
            <person name="Davis N.W."/>
            <person name="Kirkpatrick H.A."/>
            <person name="Goeden M.A."/>
            <person name="Rose D.J."/>
            <person name="Mau B."/>
            <person name="Shao Y."/>
        </authorList>
    </citation>
    <scope>NUCLEOTIDE SEQUENCE [LARGE SCALE GENOMIC DNA]</scope>
    <source>
        <strain>K12 / MG1655 / ATCC 47076</strain>
    </source>
</reference>
<reference key="4">
    <citation type="journal article" date="2006" name="Mol. Syst. Biol.">
        <title>Highly accurate genome sequences of Escherichia coli K-12 strains MG1655 and W3110.</title>
        <authorList>
            <person name="Hayashi K."/>
            <person name="Morooka N."/>
            <person name="Yamamoto Y."/>
            <person name="Fujita K."/>
            <person name="Isono K."/>
            <person name="Choi S."/>
            <person name="Ohtsubo E."/>
            <person name="Baba T."/>
            <person name="Wanner B.L."/>
            <person name="Mori H."/>
            <person name="Horiuchi T."/>
        </authorList>
    </citation>
    <scope>NUCLEOTIDE SEQUENCE [LARGE SCALE GENOMIC DNA]</scope>
    <source>
        <strain>K12 / W3110 / ATCC 27325 / DSM 5911</strain>
    </source>
</reference>
<reference key="5">
    <citation type="journal article" date="2005" name="Science">
        <title>Global topology analysis of the Escherichia coli inner membrane proteome.</title>
        <authorList>
            <person name="Daley D.O."/>
            <person name="Rapp M."/>
            <person name="Granseth E."/>
            <person name="Melen K."/>
            <person name="Drew D."/>
            <person name="von Heijne G."/>
        </authorList>
    </citation>
    <scope>TOPOLOGY [LARGE SCALE ANALYSIS]</scope>
    <source>
        <strain>K12 / MG1655 / ATCC 47076</strain>
    </source>
</reference>
<sequence length="245" mass="27885">MWKTLHQLAIPPRLYQICGWFIPWLAIASVVVLTVGWIWGFGFAPADYQQGNSYRIIYLHVPAAIWSMGIYASMAVAAFIGLVWQMKMANLAVAAMAPIGAVFTFIALVTGSAWGKPMWGTWWVWDARLTSELVLLFLYVGVIALWHAFDDRRLAGRAAGILVLIGVVNLPIIHYSVEWWNTLHQGSTRMQQSIDPAMRSPLRWSIFGFLLLSATLTLMRMRNLILLMEKRRPWVSELILKRGRK</sequence>
<feature type="chain" id="PRO_0000201551" description="Heme exporter protein C">
    <location>
        <begin position="1"/>
        <end position="245"/>
    </location>
</feature>
<feature type="topological domain" description="Cytoplasmic" evidence="1">
    <location>
        <begin position="1"/>
        <end position="20"/>
    </location>
</feature>
<feature type="transmembrane region" description="Helical" evidence="1">
    <location>
        <begin position="21"/>
        <end position="41"/>
    </location>
</feature>
<feature type="topological domain" description="Periplasmic" evidence="1">
    <location>
        <begin position="42"/>
        <end position="63"/>
    </location>
</feature>
<feature type="transmembrane region" description="Helical" evidence="1">
    <location>
        <begin position="64"/>
        <end position="84"/>
    </location>
</feature>
<feature type="topological domain" description="Cytoplasmic" evidence="1">
    <location>
        <begin position="85"/>
        <end position="90"/>
    </location>
</feature>
<feature type="transmembrane region" description="Helical" evidence="1">
    <location>
        <begin position="91"/>
        <end position="111"/>
    </location>
</feature>
<feature type="topological domain" description="Periplasmic" evidence="1">
    <location>
        <begin position="112"/>
        <end position="128"/>
    </location>
</feature>
<feature type="transmembrane region" description="Helical" evidence="1">
    <location>
        <begin position="129"/>
        <end position="149"/>
    </location>
</feature>
<feature type="topological domain" description="Cytoplasmic" evidence="1">
    <location>
        <begin position="150"/>
        <end position="159"/>
    </location>
</feature>
<feature type="transmembrane region" description="Helical" evidence="1">
    <location>
        <begin position="160"/>
        <end position="180"/>
    </location>
</feature>
<feature type="topological domain" description="Periplasmic" evidence="1">
    <location>
        <begin position="181"/>
        <end position="205"/>
    </location>
</feature>
<feature type="transmembrane region" description="Helical" evidence="1">
    <location>
        <begin position="206"/>
        <end position="226"/>
    </location>
</feature>
<feature type="topological domain" description="Cytoplasmic" evidence="1">
    <location>
        <begin position="227"/>
        <end position="245"/>
    </location>
</feature>
<feature type="helix" evidence="5">
    <location>
        <begin position="13"/>
        <end position="39"/>
    </location>
</feature>
<feature type="turn" evidence="5">
    <location>
        <begin position="40"/>
        <end position="43"/>
    </location>
</feature>
<feature type="strand" evidence="5">
    <location>
        <begin position="48"/>
        <end position="50"/>
    </location>
</feature>
<feature type="helix" evidence="5">
    <location>
        <begin position="51"/>
        <end position="56"/>
    </location>
</feature>
<feature type="helix" evidence="5">
    <location>
        <begin position="57"/>
        <end position="83"/>
    </location>
</feature>
<feature type="helix" evidence="5">
    <location>
        <begin position="87"/>
        <end position="119"/>
    </location>
</feature>
<feature type="strand" evidence="5">
    <location>
        <begin position="120"/>
        <end position="122"/>
    </location>
</feature>
<feature type="helix" evidence="5">
    <location>
        <begin position="127"/>
        <end position="147"/>
    </location>
</feature>
<feature type="strand" evidence="5">
    <location>
        <begin position="150"/>
        <end position="152"/>
    </location>
</feature>
<feature type="helix" evidence="5">
    <location>
        <begin position="157"/>
        <end position="184"/>
    </location>
</feature>
<feature type="strand" evidence="4">
    <location>
        <begin position="185"/>
        <end position="187"/>
    </location>
</feature>
<feature type="helix" evidence="3">
    <location>
        <begin position="196"/>
        <end position="198"/>
    </location>
</feature>
<feature type="helix" evidence="5">
    <location>
        <begin position="199"/>
        <end position="228"/>
    </location>
</feature>
<feature type="strand" evidence="5">
    <location>
        <begin position="230"/>
        <end position="232"/>
    </location>
</feature>
<feature type="helix" evidence="5">
    <location>
        <begin position="233"/>
        <end position="236"/>
    </location>
</feature>
<protein>
    <recommendedName>
        <fullName>Heme exporter protein C</fullName>
    </recommendedName>
    <alternativeName>
        <fullName>Cytochrome c-type biogenesis protein CcmC</fullName>
    </alternativeName>
</protein>
<proteinExistence type="evidence at protein level"/>
<organism>
    <name type="scientific">Escherichia coli (strain K12)</name>
    <dbReference type="NCBI Taxonomy" id="83333"/>
    <lineage>
        <taxon>Bacteria</taxon>
        <taxon>Pseudomonadati</taxon>
        <taxon>Pseudomonadota</taxon>
        <taxon>Gammaproteobacteria</taxon>
        <taxon>Enterobacterales</taxon>
        <taxon>Enterobacteriaceae</taxon>
        <taxon>Escherichia</taxon>
    </lineage>
</organism>
<keyword id="KW-0002">3D-structure</keyword>
<keyword id="KW-0997">Cell inner membrane</keyword>
<keyword id="KW-1003">Cell membrane</keyword>
<keyword id="KW-0201">Cytochrome c-type biogenesis</keyword>
<keyword id="KW-0472">Membrane</keyword>
<keyword id="KW-1185">Reference proteome</keyword>
<keyword id="KW-0812">Transmembrane</keyword>
<keyword id="KW-1133">Transmembrane helix</keyword>
<keyword id="KW-0813">Transport</keyword>
<gene>
    <name type="primary">ccmC</name>
    <name type="synonym">yejT</name>
    <name type="synonym">yejU</name>
    <name type="ordered locus">b2199</name>
    <name type="ordered locus">JW2187</name>
</gene>
<accession>P0ABM1</accession>
<accession>P33929</accession>
<accession>Q2MAP4</accession>
<evidence type="ECO:0000255" key="1"/>
<evidence type="ECO:0000305" key="2"/>
<evidence type="ECO:0007829" key="3">
    <source>
        <dbReference type="PDB" id="7F02"/>
    </source>
</evidence>
<evidence type="ECO:0007829" key="4">
    <source>
        <dbReference type="PDB" id="7F03"/>
    </source>
</evidence>
<evidence type="ECO:0007829" key="5">
    <source>
        <dbReference type="PDB" id="7F04"/>
    </source>
</evidence>
<dbReference type="EMBL" id="U00008">
    <property type="protein sequence ID" value="AAA16391.1"/>
    <property type="status" value="ALT_FRAME"/>
    <property type="molecule type" value="Genomic_DNA"/>
</dbReference>
<dbReference type="EMBL" id="U00096">
    <property type="protein sequence ID" value="AAC75259.1"/>
    <property type="molecule type" value="Genomic_DNA"/>
</dbReference>
<dbReference type="EMBL" id="AP009048">
    <property type="protein sequence ID" value="BAE76662.1"/>
    <property type="molecule type" value="Genomic_DNA"/>
</dbReference>
<dbReference type="PIR" id="E64989">
    <property type="entry name" value="E64989"/>
</dbReference>
<dbReference type="RefSeq" id="NP_416703.1">
    <property type="nucleotide sequence ID" value="NC_000913.3"/>
</dbReference>
<dbReference type="RefSeq" id="WP_001295447.1">
    <property type="nucleotide sequence ID" value="NZ_STEB01000002.1"/>
</dbReference>
<dbReference type="PDB" id="7F02">
    <property type="method" value="EM"/>
    <property type="resolution" value="3.24 A"/>
    <property type="chains" value="C=1-245"/>
</dbReference>
<dbReference type="PDB" id="7F03">
    <property type="method" value="EM"/>
    <property type="resolution" value="3.29 A"/>
    <property type="chains" value="C=1-245"/>
</dbReference>
<dbReference type="PDB" id="7F04">
    <property type="method" value="EM"/>
    <property type="resolution" value="2.86 A"/>
    <property type="chains" value="C=1-245"/>
</dbReference>
<dbReference type="PDB" id="7VFJ">
    <property type="method" value="EM"/>
    <property type="resolution" value="3.98 A"/>
    <property type="chains" value="C=1-245"/>
</dbReference>
<dbReference type="PDB" id="7VFP">
    <property type="method" value="EM"/>
    <property type="resolution" value="4.03 A"/>
    <property type="chains" value="C=1-245"/>
</dbReference>
<dbReference type="PDB" id="8CE1">
    <property type="method" value="EM"/>
    <property type="resolution" value="3.47 A"/>
    <property type="chains" value="C/c=1-245"/>
</dbReference>
<dbReference type="PDB" id="8CE5">
    <property type="method" value="EM"/>
    <property type="resolution" value="3.62 A"/>
    <property type="chains" value="C=1-245"/>
</dbReference>
<dbReference type="PDB" id="8CE8">
    <property type="method" value="EM"/>
    <property type="resolution" value="3.81 A"/>
    <property type="chains" value="C/c=1-245"/>
</dbReference>
<dbReference type="PDB" id="8CEA">
    <property type="method" value="EM"/>
    <property type="resolution" value="3.94 A"/>
    <property type="chains" value="C=1-245"/>
</dbReference>
<dbReference type="PDBsum" id="7F02"/>
<dbReference type="PDBsum" id="7F03"/>
<dbReference type="PDBsum" id="7F04"/>
<dbReference type="PDBsum" id="7VFJ"/>
<dbReference type="PDBsum" id="7VFP"/>
<dbReference type="PDBsum" id="8CE1"/>
<dbReference type="PDBsum" id="8CE5"/>
<dbReference type="PDBsum" id="8CE8"/>
<dbReference type="PDBsum" id="8CEA"/>
<dbReference type="EMDB" id="EMD-16597"/>
<dbReference type="EMDB" id="EMD-16599"/>
<dbReference type="EMDB" id="EMD-16601"/>
<dbReference type="EMDB" id="EMD-16602"/>
<dbReference type="EMDB" id="EMD-31394"/>
<dbReference type="EMDB" id="EMD-31395"/>
<dbReference type="EMDB" id="EMD-31396"/>
<dbReference type="EMDB" id="EMD-31956"/>
<dbReference type="EMDB" id="EMD-31957"/>
<dbReference type="SMR" id="P0ABM1"/>
<dbReference type="BioGRID" id="4263174">
    <property type="interactions" value="20"/>
</dbReference>
<dbReference type="BioGRID" id="851044">
    <property type="interactions" value="1"/>
</dbReference>
<dbReference type="ComplexPortal" id="CPX-3568">
    <property type="entry name" value="CcmABCDE system I cytochrome c biogenesis complex"/>
</dbReference>
<dbReference type="FunCoup" id="P0ABM1">
    <property type="interactions" value="555"/>
</dbReference>
<dbReference type="IntAct" id="P0ABM1">
    <property type="interactions" value="4"/>
</dbReference>
<dbReference type="MINT" id="P0ABM1"/>
<dbReference type="STRING" id="511145.b2199"/>
<dbReference type="TCDB" id="9.B.14.2.3">
    <property type="family name" value="the putative heme handling protein (hhp) family"/>
</dbReference>
<dbReference type="PaxDb" id="511145-b2199"/>
<dbReference type="EnsemblBacteria" id="AAC75259">
    <property type="protein sequence ID" value="AAC75259"/>
    <property type="gene ID" value="b2199"/>
</dbReference>
<dbReference type="GeneID" id="93774979"/>
<dbReference type="GeneID" id="946703"/>
<dbReference type="KEGG" id="ecj:JW2187"/>
<dbReference type="KEGG" id="eco:b2199"/>
<dbReference type="KEGG" id="ecoc:C3026_12290"/>
<dbReference type="PATRIC" id="fig|1411691.4.peg.37"/>
<dbReference type="EchoBASE" id="EB1987"/>
<dbReference type="eggNOG" id="COG0755">
    <property type="taxonomic scope" value="Bacteria"/>
</dbReference>
<dbReference type="HOGENOM" id="CLU_066538_2_0_6"/>
<dbReference type="InParanoid" id="P0ABM1"/>
<dbReference type="OMA" id="VQRIFYF"/>
<dbReference type="OrthoDB" id="9778550at2"/>
<dbReference type="PhylomeDB" id="P0ABM1"/>
<dbReference type="BioCyc" id="EcoCyc:CCMC-MONOMER"/>
<dbReference type="BioCyc" id="MetaCyc:CCMC-MONOMER"/>
<dbReference type="PRO" id="PR:P0ABM1"/>
<dbReference type="Proteomes" id="UP000000625">
    <property type="component" value="Chromosome"/>
</dbReference>
<dbReference type="GO" id="GO:0043190">
    <property type="term" value="C:ATP-binding cassette (ABC) transporter complex"/>
    <property type="evidence" value="ECO:0000303"/>
    <property type="project" value="ComplexPortal"/>
</dbReference>
<dbReference type="GO" id="GO:0005886">
    <property type="term" value="C:plasma membrane"/>
    <property type="evidence" value="ECO:0000314"/>
    <property type="project" value="EcoCyc"/>
</dbReference>
<dbReference type="GO" id="GO:0020037">
    <property type="term" value="F:heme binding"/>
    <property type="evidence" value="ECO:0000314"/>
    <property type="project" value="EcoCyc"/>
</dbReference>
<dbReference type="GO" id="GO:0015232">
    <property type="term" value="F:heme transmembrane transporter activity"/>
    <property type="evidence" value="ECO:0007669"/>
    <property type="project" value="InterPro"/>
</dbReference>
<dbReference type="GO" id="GO:1903607">
    <property type="term" value="P:cytochrome c biosynthetic process"/>
    <property type="evidence" value="ECO:0000315"/>
    <property type="project" value="EcoCyc"/>
</dbReference>
<dbReference type="GO" id="GO:0017004">
    <property type="term" value="P:cytochrome complex assembly"/>
    <property type="evidence" value="ECO:0000303"/>
    <property type="project" value="ComplexPortal"/>
</dbReference>
<dbReference type="GO" id="GO:1904334">
    <property type="term" value="P:heme import across plasma membrane"/>
    <property type="evidence" value="ECO:0000303"/>
    <property type="project" value="ComplexPortal"/>
</dbReference>
<dbReference type="InterPro" id="IPR002541">
    <property type="entry name" value="Cyt_c_assembly"/>
</dbReference>
<dbReference type="InterPro" id="IPR003557">
    <property type="entry name" value="Cyt_c_biogenesis_CcmC"/>
</dbReference>
<dbReference type="InterPro" id="IPR045062">
    <property type="entry name" value="Cyt_c_biogenesis_CcsA/CcmC"/>
</dbReference>
<dbReference type="NCBIfam" id="TIGR01191">
    <property type="entry name" value="ccmC"/>
    <property type="match status" value="1"/>
</dbReference>
<dbReference type="PANTHER" id="PTHR30071:SF1">
    <property type="entry name" value="CYTOCHROME B_B6 PROTEIN-RELATED"/>
    <property type="match status" value="1"/>
</dbReference>
<dbReference type="PANTHER" id="PTHR30071">
    <property type="entry name" value="HEME EXPORTER PROTEIN C"/>
    <property type="match status" value="1"/>
</dbReference>
<dbReference type="Pfam" id="PF01578">
    <property type="entry name" value="Cytochrom_C_asm"/>
    <property type="match status" value="1"/>
</dbReference>
<dbReference type="PRINTS" id="PR01386">
    <property type="entry name" value="CCMCBIOGNSIS"/>
</dbReference>
<name>CCMC_ECOLI</name>
<comment type="function">
    <text>Required for the export of heme to the periplasm for the biogenesis of c-type cytochromes.</text>
</comment>
<comment type="interaction">
    <interactant intactId="EBI-2123469">
        <id>P0ABM1</id>
    </interactant>
    <interactant intactId="EBI-6402796">
        <id>P33931</id>
        <label>ccmA</label>
    </interactant>
    <organismsDiffer>false</organismsDiffer>
    <experiments>4</experiments>
</comment>
<comment type="interaction">
    <interactant intactId="EBI-2123469">
        <id>P0ABM1</id>
    </interactant>
    <interactant intactId="EBI-3894922">
        <id>P0ABM5</id>
        <label>ccmD</label>
    </interactant>
    <organismsDiffer>false</organismsDiffer>
    <experiments>4</experiments>
</comment>
<comment type="interaction">
    <interactant intactId="EBI-2123469">
        <id>P0ABM1</id>
    </interactant>
    <interactant intactId="EBI-1128007">
        <id>P69490</id>
        <label>ccmE</label>
    </interactant>
    <organismsDiffer>false</organismsDiffer>
    <experiments>7</experiments>
</comment>
<comment type="subcellular location">
    <subcellularLocation>
        <location>Cell inner membrane</location>
        <topology>Multi-pass membrane protein</topology>
    </subcellularLocation>
</comment>
<comment type="similarity">
    <text evidence="2">Belongs to the CcmC/CycZ/HelC family.</text>
</comment>
<comment type="sequence caution" evidence="2">
    <conflict type="frameshift">
        <sequence resource="EMBL-CDS" id="AAA16391"/>
    </conflict>
</comment>